<reference key="1">
    <citation type="journal article" date="2005" name="Nucleic Acids Res.">
        <title>The genome sequence of Salmonella enterica serovar Choleraesuis, a highly invasive and resistant zoonotic pathogen.</title>
        <authorList>
            <person name="Chiu C.-H."/>
            <person name="Tang P."/>
            <person name="Chu C."/>
            <person name="Hu S."/>
            <person name="Bao Q."/>
            <person name="Yu J."/>
            <person name="Chou Y.-Y."/>
            <person name="Wang H.-S."/>
            <person name="Lee Y.-S."/>
        </authorList>
    </citation>
    <scope>NUCLEOTIDE SEQUENCE [LARGE SCALE GENOMIC DNA]</scope>
    <source>
        <strain>SC-B67</strain>
    </source>
</reference>
<evidence type="ECO:0000255" key="1">
    <source>
        <dbReference type="HAMAP-Rule" id="MF_00787"/>
    </source>
</evidence>
<dbReference type="EC" id="2.1.1.195" evidence="1"/>
<dbReference type="EMBL" id="AE017220">
    <property type="protein sequence ID" value="AAX65946.1"/>
    <property type="molecule type" value="Genomic_DNA"/>
</dbReference>
<dbReference type="RefSeq" id="WP_001292914.1">
    <property type="nucleotide sequence ID" value="NC_006905.1"/>
</dbReference>
<dbReference type="SMR" id="Q57MW5"/>
<dbReference type="KEGG" id="sec:SCH_2040"/>
<dbReference type="HOGENOM" id="CLU_041273_1_0_6"/>
<dbReference type="UniPathway" id="UPA00148">
    <property type="reaction ID" value="UER00227"/>
</dbReference>
<dbReference type="Proteomes" id="UP000000538">
    <property type="component" value="Chromosome"/>
</dbReference>
<dbReference type="GO" id="GO:0043780">
    <property type="term" value="F:cobalt-precorrin-5B C1-methyltransferase activity"/>
    <property type="evidence" value="ECO:0007669"/>
    <property type="project" value="RHEA"/>
</dbReference>
<dbReference type="GO" id="GO:0019251">
    <property type="term" value="P:anaerobic cobalamin biosynthetic process"/>
    <property type="evidence" value="ECO:0007669"/>
    <property type="project" value="UniProtKB-UniRule"/>
</dbReference>
<dbReference type="GO" id="GO:0032259">
    <property type="term" value="P:methylation"/>
    <property type="evidence" value="ECO:0007669"/>
    <property type="project" value="UniProtKB-KW"/>
</dbReference>
<dbReference type="Gene3D" id="3.30.2110.10">
    <property type="entry name" value="CbiD-like"/>
    <property type="match status" value="1"/>
</dbReference>
<dbReference type="HAMAP" id="MF_00787">
    <property type="entry name" value="CbiD"/>
    <property type="match status" value="1"/>
</dbReference>
<dbReference type="InterPro" id="IPR002748">
    <property type="entry name" value="CbiD"/>
</dbReference>
<dbReference type="InterPro" id="IPR036074">
    <property type="entry name" value="CbiD_sf"/>
</dbReference>
<dbReference type="NCBIfam" id="TIGR00312">
    <property type="entry name" value="cbiD"/>
    <property type="match status" value="1"/>
</dbReference>
<dbReference type="PANTHER" id="PTHR35863">
    <property type="entry name" value="COBALT-PRECORRIN-5B C(1)-METHYLTRANSFERASE"/>
    <property type="match status" value="1"/>
</dbReference>
<dbReference type="PANTHER" id="PTHR35863:SF1">
    <property type="entry name" value="COBALT-PRECORRIN-5B C(1)-METHYLTRANSFERASE"/>
    <property type="match status" value="1"/>
</dbReference>
<dbReference type="Pfam" id="PF01888">
    <property type="entry name" value="CbiD"/>
    <property type="match status" value="1"/>
</dbReference>
<dbReference type="PIRSF" id="PIRSF026782">
    <property type="entry name" value="CbiD"/>
    <property type="match status" value="1"/>
</dbReference>
<dbReference type="SUPFAM" id="SSF111342">
    <property type="entry name" value="CbiD-like"/>
    <property type="match status" value="1"/>
</dbReference>
<protein>
    <recommendedName>
        <fullName evidence="1">Cobalt-precorrin-5B C(1)-methyltransferase</fullName>
        <ecNumber evidence="1">2.1.1.195</ecNumber>
    </recommendedName>
    <alternativeName>
        <fullName evidence="1">Cobalt-precorrin-6A synthase</fullName>
    </alternativeName>
</protein>
<name>CBID_SALCH</name>
<keyword id="KW-0169">Cobalamin biosynthesis</keyword>
<keyword id="KW-0489">Methyltransferase</keyword>
<keyword id="KW-0949">S-adenosyl-L-methionine</keyword>
<keyword id="KW-0808">Transferase</keyword>
<comment type="function">
    <text evidence="1">Catalyzes the methylation of C-1 in cobalt-precorrin-5B to form cobalt-precorrin-6A.</text>
</comment>
<comment type="catalytic activity">
    <reaction evidence="1">
        <text>Co-precorrin-5B + S-adenosyl-L-methionine = Co-precorrin-6A + S-adenosyl-L-homocysteine</text>
        <dbReference type="Rhea" id="RHEA:26285"/>
        <dbReference type="ChEBI" id="CHEBI:57856"/>
        <dbReference type="ChEBI" id="CHEBI:59789"/>
        <dbReference type="ChEBI" id="CHEBI:60063"/>
        <dbReference type="ChEBI" id="CHEBI:60064"/>
        <dbReference type="EC" id="2.1.1.195"/>
    </reaction>
</comment>
<comment type="pathway">
    <text evidence="1">Cofactor biosynthesis; adenosylcobalamin biosynthesis; cob(II)yrinate a,c-diamide from sirohydrochlorin (anaerobic route): step 6/10.</text>
</comment>
<comment type="similarity">
    <text evidence="1">Belongs to the CbiD family.</text>
</comment>
<feature type="chain" id="PRO_0000257777" description="Cobalt-precorrin-5B C(1)-methyltransferase">
    <location>
        <begin position="1"/>
        <end position="379"/>
    </location>
</feature>
<organism>
    <name type="scientific">Salmonella choleraesuis (strain SC-B67)</name>
    <dbReference type="NCBI Taxonomy" id="321314"/>
    <lineage>
        <taxon>Bacteria</taxon>
        <taxon>Pseudomonadati</taxon>
        <taxon>Pseudomonadota</taxon>
        <taxon>Gammaproteobacteria</taxon>
        <taxon>Enterobacterales</taxon>
        <taxon>Enterobacteriaceae</taxon>
        <taxon>Salmonella</taxon>
    </lineage>
</organism>
<sequence>MSELSFDAPVWHHGKALRKGYTTGSCATAAAKVAALMVLRQHLIHQVSIVTPSGVTLCLNVESPHIEGQQAIAAIRKDGGDDVDATHGMLIFARVTLNDSGEITLTGGEGIGTVTRKGVGLPLGSAAINRTPRHTIESAVREAIGPARGADVEIFAPEGEARAQKTYNSRLGILGGISIIGTTGIVTPMSEESWKRSLSLELEIKRASGLTRVILVPGNHGERFVREQMGVDTQAVVTMSNFVGYMIEEAVRLGFCQIVLVGHPGKLIKIAAGIFHTHSHIADARMETLVAHLALLGAPLELLTLVGDCDTTEAAMEHIEAYGFGHIYNHLARRICLRVMQMLRFTKTPPVCDAILFSFDNHILGSNRPVDEIAKELQC</sequence>
<proteinExistence type="inferred from homology"/>
<accession>Q57MW5</accession>
<gene>
    <name evidence="1" type="primary">cbiD</name>
    <name type="ordered locus">SCH_2040</name>
</gene>